<accession>A6LE92</accession>
<dbReference type="EC" id="5.3.1.23" evidence="1"/>
<dbReference type="EMBL" id="CP000140">
    <property type="protein sequence ID" value="ABR44006.1"/>
    <property type="status" value="ALT_INIT"/>
    <property type="molecule type" value="Genomic_DNA"/>
</dbReference>
<dbReference type="SMR" id="A6LE92"/>
<dbReference type="STRING" id="435591.BDI_2280"/>
<dbReference type="PaxDb" id="435591-BDI_2280"/>
<dbReference type="KEGG" id="pdi:BDI_2280"/>
<dbReference type="eggNOG" id="COG0182">
    <property type="taxonomic scope" value="Bacteria"/>
</dbReference>
<dbReference type="HOGENOM" id="CLU_016218_1_2_10"/>
<dbReference type="UniPathway" id="UPA00904">
    <property type="reaction ID" value="UER00874"/>
</dbReference>
<dbReference type="Proteomes" id="UP000000566">
    <property type="component" value="Chromosome"/>
</dbReference>
<dbReference type="GO" id="GO:0046523">
    <property type="term" value="F:S-methyl-5-thioribose-1-phosphate isomerase activity"/>
    <property type="evidence" value="ECO:0007669"/>
    <property type="project" value="UniProtKB-UniRule"/>
</dbReference>
<dbReference type="GO" id="GO:0019509">
    <property type="term" value="P:L-methionine salvage from methylthioadenosine"/>
    <property type="evidence" value="ECO:0007669"/>
    <property type="project" value="UniProtKB-UniRule"/>
</dbReference>
<dbReference type="FunFam" id="1.20.120.420:FF:000003">
    <property type="entry name" value="Methylthioribose-1-phosphate isomerase"/>
    <property type="match status" value="1"/>
</dbReference>
<dbReference type="FunFam" id="3.40.50.10470:FF:000006">
    <property type="entry name" value="Methylthioribose-1-phosphate isomerase"/>
    <property type="match status" value="1"/>
</dbReference>
<dbReference type="Gene3D" id="1.20.120.420">
    <property type="entry name" value="translation initiation factor eif-2b, domain 1"/>
    <property type="match status" value="1"/>
</dbReference>
<dbReference type="Gene3D" id="3.40.50.10470">
    <property type="entry name" value="Translation initiation factor eif-2b, domain 2"/>
    <property type="match status" value="1"/>
</dbReference>
<dbReference type="HAMAP" id="MF_01678">
    <property type="entry name" value="Salvage_MtnA"/>
    <property type="match status" value="1"/>
</dbReference>
<dbReference type="InterPro" id="IPR000649">
    <property type="entry name" value="IF-2B-related"/>
</dbReference>
<dbReference type="InterPro" id="IPR005251">
    <property type="entry name" value="IF-M1Pi"/>
</dbReference>
<dbReference type="InterPro" id="IPR042529">
    <property type="entry name" value="IF_2B-like_C"/>
</dbReference>
<dbReference type="InterPro" id="IPR011559">
    <property type="entry name" value="Initiation_fac_2B_a/b/d"/>
</dbReference>
<dbReference type="InterPro" id="IPR027363">
    <property type="entry name" value="M1Pi_N"/>
</dbReference>
<dbReference type="InterPro" id="IPR037171">
    <property type="entry name" value="NagB/RpiA_transferase-like"/>
</dbReference>
<dbReference type="NCBIfam" id="TIGR00524">
    <property type="entry name" value="eIF-2B_rel"/>
    <property type="match status" value="1"/>
</dbReference>
<dbReference type="NCBIfam" id="NF004326">
    <property type="entry name" value="PRK05720.1"/>
    <property type="match status" value="1"/>
</dbReference>
<dbReference type="NCBIfam" id="TIGR00512">
    <property type="entry name" value="salvage_mtnA"/>
    <property type="match status" value="1"/>
</dbReference>
<dbReference type="PANTHER" id="PTHR43475">
    <property type="entry name" value="METHYLTHIORIBOSE-1-PHOSPHATE ISOMERASE"/>
    <property type="match status" value="1"/>
</dbReference>
<dbReference type="PANTHER" id="PTHR43475:SF1">
    <property type="entry name" value="METHYLTHIORIBOSE-1-PHOSPHATE ISOMERASE"/>
    <property type="match status" value="1"/>
</dbReference>
<dbReference type="Pfam" id="PF01008">
    <property type="entry name" value="IF-2B"/>
    <property type="match status" value="1"/>
</dbReference>
<dbReference type="SUPFAM" id="SSF100950">
    <property type="entry name" value="NagB/RpiA/CoA transferase-like"/>
    <property type="match status" value="1"/>
</dbReference>
<protein>
    <recommendedName>
        <fullName evidence="1">Methylthioribose-1-phosphate isomerase</fullName>
        <shortName evidence="1">M1Pi</shortName>
        <shortName evidence="1">MTR-1-P isomerase</shortName>
        <ecNumber evidence="1">5.3.1.23</ecNumber>
    </recommendedName>
    <alternativeName>
        <fullName evidence="1">S-methyl-5-thioribose-1-phosphate isomerase</fullName>
    </alternativeName>
</protein>
<name>MTNA_PARD8</name>
<evidence type="ECO:0000255" key="1">
    <source>
        <dbReference type="HAMAP-Rule" id="MF_01678"/>
    </source>
</evidence>
<evidence type="ECO:0000305" key="2"/>
<keyword id="KW-0028">Amino-acid biosynthesis</keyword>
<keyword id="KW-0413">Isomerase</keyword>
<keyword id="KW-0486">Methionine biosynthesis</keyword>
<keyword id="KW-1185">Reference proteome</keyword>
<gene>
    <name evidence="1" type="primary">mtnA</name>
    <name type="ordered locus">BDI_2280</name>
</gene>
<proteinExistence type="inferred from homology"/>
<sequence length="335" mass="36938">MRFNEQADGVIILDQTLLPGKEAYLTLTTAEEIWDAIYKLKVRGAPAIGVAAAYGIYVCARRIDTAEKSVFVNEFRKIKEYLAGSRPTAVNLVAALNRMERVLVAHPTLSVPEWKELLYKEAIAIREEDAAACRQIGENCLELLRPGMGILTHCNAGHLAVSEYGTALAPIYLGQERGYGFKVFADETRPLLQGARLTAYELSRAGVDVTLICDNMASVVMRKGWVHAVVVGCDRVAANGDVANKIGTSGVAILARHYKIPFYVLGPTSTIDGSCPDGDSIVIEERNPDEVTEMWYSRRMAPKDVKVYNPAFDITPHELITAIITEKGIFYKNNR</sequence>
<comment type="function">
    <text evidence="1">Catalyzes the interconversion of methylthioribose-1-phosphate (MTR-1-P) into methylthioribulose-1-phosphate (MTRu-1-P).</text>
</comment>
<comment type="catalytic activity">
    <reaction evidence="1">
        <text>5-(methylsulfanyl)-alpha-D-ribose 1-phosphate = 5-(methylsulfanyl)-D-ribulose 1-phosphate</text>
        <dbReference type="Rhea" id="RHEA:19989"/>
        <dbReference type="ChEBI" id="CHEBI:58533"/>
        <dbReference type="ChEBI" id="CHEBI:58548"/>
        <dbReference type="EC" id="5.3.1.23"/>
    </reaction>
</comment>
<comment type="pathway">
    <text evidence="1">Amino-acid biosynthesis; L-methionine biosynthesis via salvage pathway; L-methionine from S-methyl-5-thio-alpha-D-ribose 1-phosphate: step 1/6.</text>
</comment>
<comment type="similarity">
    <text evidence="2">Belongs to the eIF-2B alpha/beta/delta subunits family. MtnA subfamily.</text>
</comment>
<comment type="sequence caution" evidence="2">
    <conflict type="erroneous initiation">
        <sequence resource="EMBL-CDS" id="ABR44006"/>
    </conflict>
</comment>
<reference key="1">
    <citation type="journal article" date="2007" name="PLoS Biol.">
        <title>Evolution of symbiotic bacteria in the distal human intestine.</title>
        <authorList>
            <person name="Xu J."/>
            <person name="Mahowald M.A."/>
            <person name="Ley R.E."/>
            <person name="Lozupone C.A."/>
            <person name="Hamady M."/>
            <person name="Martens E.C."/>
            <person name="Henrissat B."/>
            <person name="Coutinho P.M."/>
            <person name="Minx P."/>
            <person name="Latreille P."/>
            <person name="Cordum H."/>
            <person name="Van Brunt A."/>
            <person name="Kim K."/>
            <person name="Fulton R.S."/>
            <person name="Fulton L.A."/>
            <person name="Clifton S.W."/>
            <person name="Wilson R.K."/>
            <person name="Knight R.D."/>
            <person name="Gordon J.I."/>
        </authorList>
    </citation>
    <scope>NUCLEOTIDE SEQUENCE [LARGE SCALE GENOMIC DNA]</scope>
    <source>
        <strain>ATCC 8503 / DSM 20701 / CIP 104284 / JCM 5825 / NCTC 11152</strain>
    </source>
</reference>
<organism>
    <name type="scientific">Parabacteroides distasonis (strain ATCC 8503 / DSM 20701 / CIP 104284 / JCM 5825 / NCTC 11152)</name>
    <dbReference type="NCBI Taxonomy" id="435591"/>
    <lineage>
        <taxon>Bacteria</taxon>
        <taxon>Pseudomonadati</taxon>
        <taxon>Bacteroidota</taxon>
        <taxon>Bacteroidia</taxon>
        <taxon>Bacteroidales</taxon>
        <taxon>Tannerellaceae</taxon>
        <taxon>Parabacteroides</taxon>
    </lineage>
</organism>
<feature type="chain" id="PRO_0000357214" description="Methylthioribose-1-phosphate isomerase">
    <location>
        <begin position="1"/>
        <end position="335"/>
    </location>
</feature>
<feature type="active site" description="Proton donor" evidence="1">
    <location>
        <position position="234"/>
    </location>
</feature>
<feature type="binding site" evidence="1">
    <location>
        <begin position="43"/>
        <end position="45"/>
    </location>
    <ligand>
        <name>substrate</name>
    </ligand>
</feature>
<feature type="binding site" evidence="1">
    <location>
        <position position="86"/>
    </location>
    <ligand>
        <name>substrate</name>
    </ligand>
</feature>
<feature type="binding site" evidence="1">
    <location>
        <position position="193"/>
    </location>
    <ligand>
        <name>substrate</name>
    </ligand>
</feature>
<feature type="binding site" evidence="1">
    <location>
        <begin position="244"/>
        <end position="245"/>
    </location>
    <ligand>
        <name>substrate</name>
    </ligand>
</feature>
<feature type="site" description="Transition state stabilizer" evidence="1">
    <location>
        <position position="154"/>
    </location>
</feature>